<keyword id="KW-0119">Carbohydrate metabolism</keyword>
<keyword id="KW-0520">NAD</keyword>
<keyword id="KW-0521">NADP</keyword>
<keyword id="KW-0560">Oxidoreductase</keyword>
<keyword id="KW-0859">Xylose metabolism</keyword>
<reference key="1">
    <citation type="journal article" date="2015" name="Genome Announc.">
        <title>Genome sequence of Aspergillus flavus NRRL 3357, a strain that causes aflatoxin contamination of food and feed.</title>
        <authorList>
            <person name="Nierman W.C."/>
            <person name="Yu J."/>
            <person name="Fedorova-Abrams N.D."/>
            <person name="Losada L."/>
            <person name="Cleveland T.E."/>
            <person name="Bhatnagar D."/>
            <person name="Bennett J.W."/>
            <person name="Dean R."/>
            <person name="Payne G.A."/>
        </authorList>
    </citation>
    <scope>NUCLEOTIDE SEQUENCE [LARGE SCALE GENOMIC DNA]</scope>
    <source>
        <strain>ATCC 200026 / FGSC A1120 / IAM 13836 / NRRL 3357 / JCM 12722 / SRRC 167</strain>
    </source>
</reference>
<comment type="function">
    <text evidence="1">Catalyzes the initial reaction in the xylose utilization pathway by reducing D-xylose into xylitol. Xylose is a major component of hemicelluloses such as xylan. Most fungi utilize D-xylose via three enzymatic reactions, xylose reductase (XR), xylitol dehydrogenase (XDH), and xylulokinase, to form xylulose 5-phosphate, which enters pentose phosphate pathway (By similarity).</text>
</comment>
<comment type="catalytic activity">
    <reaction>
        <text>xylitol + NAD(+) = D-xylose + NADH + H(+)</text>
        <dbReference type="Rhea" id="RHEA:27441"/>
        <dbReference type="ChEBI" id="CHEBI:15378"/>
        <dbReference type="ChEBI" id="CHEBI:17151"/>
        <dbReference type="ChEBI" id="CHEBI:53455"/>
        <dbReference type="ChEBI" id="CHEBI:57540"/>
        <dbReference type="ChEBI" id="CHEBI:57945"/>
        <dbReference type="EC" id="1.1.1.307"/>
    </reaction>
</comment>
<comment type="catalytic activity">
    <reaction>
        <text>xylitol + NADP(+) = D-xylose + NADPH + H(+)</text>
        <dbReference type="Rhea" id="RHEA:27445"/>
        <dbReference type="ChEBI" id="CHEBI:15378"/>
        <dbReference type="ChEBI" id="CHEBI:17151"/>
        <dbReference type="ChEBI" id="CHEBI:53455"/>
        <dbReference type="ChEBI" id="CHEBI:57783"/>
        <dbReference type="ChEBI" id="CHEBI:58349"/>
        <dbReference type="EC" id="1.1.1.307"/>
    </reaction>
</comment>
<comment type="pathway">
    <text>Carbohydrate metabolism; D-xylose degradation.</text>
</comment>
<comment type="similarity">
    <text evidence="2">Belongs to the aldo/keto reductase family.</text>
</comment>
<evidence type="ECO:0000250" key="1"/>
<evidence type="ECO:0000305" key="2"/>
<feature type="chain" id="PRO_0000393498" description="Probable NAD(P)H-dependent D-xylose reductase xyl1">
    <location>
        <begin position="1"/>
        <end position="319"/>
    </location>
</feature>
<feature type="active site" description="Proton donor" evidence="1">
    <location>
        <position position="50"/>
    </location>
</feature>
<feature type="binding site" evidence="1">
    <location>
        <position position="112"/>
    </location>
    <ligand>
        <name>substrate</name>
    </ligand>
</feature>
<feature type="binding site" evidence="1">
    <location>
        <begin position="166"/>
        <end position="167"/>
    </location>
    <ligand>
        <name>NAD(+)</name>
        <dbReference type="ChEBI" id="CHEBI:57540"/>
    </ligand>
</feature>
<feature type="binding site" evidence="1">
    <location>
        <begin position="215"/>
        <end position="224"/>
    </location>
    <ligand>
        <name>NAD(+)</name>
        <dbReference type="ChEBI" id="CHEBI:57540"/>
    </ligand>
</feature>
<feature type="binding site" evidence="1">
    <location>
        <begin position="271"/>
        <end position="281"/>
    </location>
    <ligand>
        <name>NAD(+)</name>
        <dbReference type="ChEBI" id="CHEBI:57540"/>
    </ligand>
</feature>
<feature type="site" description="Lowers pKa of active site Tyr" evidence="1">
    <location>
        <position position="79"/>
    </location>
</feature>
<dbReference type="EC" id="1.1.1.307"/>
<dbReference type="EMBL" id="EQ963473">
    <property type="protein sequence ID" value="EED55688.1"/>
    <property type="molecule type" value="Genomic_DNA"/>
</dbReference>
<dbReference type="RefSeq" id="XP_002374470.1">
    <property type="nucleotide sequence ID" value="XM_002374429.1"/>
</dbReference>
<dbReference type="SMR" id="B8N195"/>
<dbReference type="STRING" id="332952.B8N195"/>
<dbReference type="EnsemblFungi" id="EED55688">
    <property type="protein sequence ID" value="EED55688"/>
    <property type="gene ID" value="AFLA_029600"/>
</dbReference>
<dbReference type="VEuPathDB" id="FungiDB:AFLA_000817"/>
<dbReference type="eggNOG" id="KOG1577">
    <property type="taxonomic scope" value="Eukaryota"/>
</dbReference>
<dbReference type="HOGENOM" id="CLU_023205_0_0_1"/>
<dbReference type="OMA" id="VHWPSEG"/>
<dbReference type="UniPathway" id="UPA00810"/>
<dbReference type="GO" id="GO:0032866">
    <property type="term" value="F:D-xylose reductase (NADPH) activity"/>
    <property type="evidence" value="ECO:0007669"/>
    <property type="project" value="InterPro"/>
</dbReference>
<dbReference type="GO" id="GO:0042843">
    <property type="term" value="P:D-xylose catabolic process"/>
    <property type="evidence" value="ECO:0007669"/>
    <property type="project" value="UniProtKB-UniPathway"/>
</dbReference>
<dbReference type="CDD" id="cd19115">
    <property type="entry name" value="AKR_AKR2D1"/>
    <property type="match status" value="1"/>
</dbReference>
<dbReference type="FunFam" id="3.20.20.100:FF:000007">
    <property type="entry name" value="NAD(P)H-dependent D-xylose reductase xyl1"/>
    <property type="match status" value="1"/>
</dbReference>
<dbReference type="Gene3D" id="3.20.20.100">
    <property type="entry name" value="NADP-dependent oxidoreductase domain"/>
    <property type="match status" value="1"/>
</dbReference>
<dbReference type="InterPro" id="IPR020471">
    <property type="entry name" value="AKR"/>
</dbReference>
<dbReference type="InterPro" id="IPR044487">
    <property type="entry name" value="AKR2D"/>
</dbReference>
<dbReference type="InterPro" id="IPR018170">
    <property type="entry name" value="Aldo/ket_reductase_CS"/>
</dbReference>
<dbReference type="InterPro" id="IPR023210">
    <property type="entry name" value="NADP_OxRdtase_dom"/>
</dbReference>
<dbReference type="InterPro" id="IPR036812">
    <property type="entry name" value="NADP_OxRdtase_dom_sf"/>
</dbReference>
<dbReference type="PANTHER" id="PTHR11732">
    <property type="entry name" value="ALDO/KETO REDUCTASE"/>
    <property type="match status" value="1"/>
</dbReference>
<dbReference type="Pfam" id="PF00248">
    <property type="entry name" value="Aldo_ket_red"/>
    <property type="match status" value="1"/>
</dbReference>
<dbReference type="PIRSF" id="PIRSF000097">
    <property type="entry name" value="AKR"/>
    <property type="match status" value="1"/>
</dbReference>
<dbReference type="PRINTS" id="PR00069">
    <property type="entry name" value="ALDKETRDTASE"/>
</dbReference>
<dbReference type="SUPFAM" id="SSF51430">
    <property type="entry name" value="NAD(P)-linked oxidoreductase"/>
    <property type="match status" value="1"/>
</dbReference>
<dbReference type="PROSITE" id="PS00798">
    <property type="entry name" value="ALDOKETO_REDUCTASE_1"/>
    <property type="match status" value="1"/>
</dbReference>
<dbReference type="PROSITE" id="PS00062">
    <property type="entry name" value="ALDOKETO_REDUCTASE_2"/>
    <property type="match status" value="1"/>
</dbReference>
<dbReference type="PROSITE" id="PS00063">
    <property type="entry name" value="ALDOKETO_REDUCTASE_3"/>
    <property type="match status" value="1"/>
</dbReference>
<organism>
    <name type="scientific">Aspergillus flavus (strain ATCC 200026 / FGSC A1120 / IAM 13836 / NRRL 3357 / JCM 12722 / SRRC 167)</name>
    <dbReference type="NCBI Taxonomy" id="332952"/>
    <lineage>
        <taxon>Eukaryota</taxon>
        <taxon>Fungi</taxon>
        <taxon>Dikarya</taxon>
        <taxon>Ascomycota</taxon>
        <taxon>Pezizomycotina</taxon>
        <taxon>Eurotiomycetes</taxon>
        <taxon>Eurotiomycetidae</taxon>
        <taxon>Eurotiales</taxon>
        <taxon>Aspergillaceae</taxon>
        <taxon>Aspergillus</taxon>
        <taxon>Aspergillus subgen. Circumdati</taxon>
    </lineage>
</organism>
<name>XYL1_ASPFN</name>
<accession>B8N195</accession>
<gene>
    <name type="primary">xyl1</name>
    <name type="ORF">AFLA_029600</name>
</gene>
<protein>
    <recommendedName>
        <fullName>Probable NAD(P)H-dependent D-xylose reductase xyl1</fullName>
        <shortName>XR</shortName>
        <ecNumber>1.1.1.307</ecNumber>
    </recommendedName>
</protein>
<sequence length="319" mass="35868">MASPTVKLNSGHDMPLVGFGLWKVNNETCADQVYEAIKAGYRLFDGACDYGNEVECGQGVARAIKEGIVKREELFIVSKLWNSFHEGDRVEPICRKQLADWGVDYFDLYIVHFPVALKYVDPAVRYPPGWNSESGKIEFSNATIQETWTAMESLVDKKLARSIGVSNFSAQLLMDLLRYARVRPATLQIEHHPYLTQPRLVEYAQKEGIAVTAYSSFGPLSFLELEVKNAVDTPPLFEHNTIKSLAEKYGKTPAQVLLRWATQRGIAVIPKSNNPTRLSQNLEVTGWDLEKSELEAISSLDKGLRFNDPIGYGMYVPIF</sequence>
<proteinExistence type="inferred from homology"/>